<feature type="chain" id="PRO_0000303896" description="SET domain-containing protein 8">
    <location>
        <begin position="1"/>
        <end position="429"/>
    </location>
</feature>
<feature type="domain" description="SET" evidence="1">
    <location>
        <begin position="17"/>
        <end position="232"/>
    </location>
</feature>
<name>SET8_SCHPO</name>
<organism>
    <name type="scientific">Schizosaccharomyces pombe (strain 972 / ATCC 24843)</name>
    <name type="common">Fission yeast</name>
    <dbReference type="NCBI Taxonomy" id="284812"/>
    <lineage>
        <taxon>Eukaryota</taxon>
        <taxon>Fungi</taxon>
        <taxon>Dikarya</taxon>
        <taxon>Ascomycota</taxon>
        <taxon>Taphrinomycotina</taxon>
        <taxon>Schizosaccharomycetes</taxon>
        <taxon>Schizosaccharomycetales</taxon>
        <taxon>Schizosaccharomycetaceae</taxon>
        <taxon>Schizosaccharomyces</taxon>
    </lineage>
</organism>
<evidence type="ECO:0000255" key="1">
    <source>
        <dbReference type="PROSITE-ProRule" id="PRU00190"/>
    </source>
</evidence>
<evidence type="ECO:0000269" key="2">
    <source>
    </source>
</evidence>
<reference key="1">
    <citation type="journal article" date="2002" name="Nature">
        <title>The genome sequence of Schizosaccharomyces pombe.</title>
        <authorList>
            <person name="Wood V."/>
            <person name="Gwilliam R."/>
            <person name="Rajandream M.A."/>
            <person name="Lyne M.H."/>
            <person name="Lyne R."/>
            <person name="Stewart A."/>
            <person name="Sgouros J.G."/>
            <person name="Peat N."/>
            <person name="Hayles J."/>
            <person name="Baker S.G."/>
            <person name="Basham D."/>
            <person name="Bowman S."/>
            <person name="Brooks K."/>
            <person name="Brown D."/>
            <person name="Brown S."/>
            <person name="Chillingworth T."/>
            <person name="Churcher C.M."/>
            <person name="Collins M."/>
            <person name="Connor R."/>
            <person name="Cronin A."/>
            <person name="Davis P."/>
            <person name="Feltwell T."/>
            <person name="Fraser A."/>
            <person name="Gentles S."/>
            <person name="Goble A."/>
            <person name="Hamlin N."/>
            <person name="Harris D.E."/>
            <person name="Hidalgo J."/>
            <person name="Hodgson G."/>
            <person name="Holroyd S."/>
            <person name="Hornsby T."/>
            <person name="Howarth S."/>
            <person name="Huckle E.J."/>
            <person name="Hunt S."/>
            <person name="Jagels K."/>
            <person name="James K.D."/>
            <person name="Jones L."/>
            <person name="Jones M."/>
            <person name="Leather S."/>
            <person name="McDonald S."/>
            <person name="McLean J."/>
            <person name="Mooney P."/>
            <person name="Moule S."/>
            <person name="Mungall K.L."/>
            <person name="Murphy L.D."/>
            <person name="Niblett D."/>
            <person name="Odell C."/>
            <person name="Oliver K."/>
            <person name="O'Neil S."/>
            <person name="Pearson D."/>
            <person name="Quail M.A."/>
            <person name="Rabbinowitsch E."/>
            <person name="Rutherford K.M."/>
            <person name="Rutter S."/>
            <person name="Saunders D."/>
            <person name="Seeger K."/>
            <person name="Sharp S."/>
            <person name="Skelton J."/>
            <person name="Simmonds M.N."/>
            <person name="Squares R."/>
            <person name="Squares S."/>
            <person name="Stevens K."/>
            <person name="Taylor K."/>
            <person name="Taylor R.G."/>
            <person name="Tivey A."/>
            <person name="Walsh S.V."/>
            <person name="Warren T."/>
            <person name="Whitehead S."/>
            <person name="Woodward J.R."/>
            <person name="Volckaert G."/>
            <person name="Aert R."/>
            <person name="Robben J."/>
            <person name="Grymonprez B."/>
            <person name="Weltjens I."/>
            <person name="Vanstreels E."/>
            <person name="Rieger M."/>
            <person name="Schaefer M."/>
            <person name="Mueller-Auer S."/>
            <person name="Gabel C."/>
            <person name="Fuchs M."/>
            <person name="Duesterhoeft A."/>
            <person name="Fritzc C."/>
            <person name="Holzer E."/>
            <person name="Moestl D."/>
            <person name="Hilbert H."/>
            <person name="Borzym K."/>
            <person name="Langer I."/>
            <person name="Beck A."/>
            <person name="Lehrach H."/>
            <person name="Reinhardt R."/>
            <person name="Pohl T.M."/>
            <person name="Eger P."/>
            <person name="Zimmermann W."/>
            <person name="Wedler H."/>
            <person name="Wambutt R."/>
            <person name="Purnelle B."/>
            <person name="Goffeau A."/>
            <person name="Cadieu E."/>
            <person name="Dreano S."/>
            <person name="Gloux S."/>
            <person name="Lelaure V."/>
            <person name="Mottier S."/>
            <person name="Galibert F."/>
            <person name="Aves S.J."/>
            <person name="Xiang Z."/>
            <person name="Hunt C."/>
            <person name="Moore K."/>
            <person name="Hurst S.M."/>
            <person name="Lucas M."/>
            <person name="Rochet M."/>
            <person name="Gaillardin C."/>
            <person name="Tallada V.A."/>
            <person name="Garzon A."/>
            <person name="Thode G."/>
            <person name="Daga R.R."/>
            <person name="Cruzado L."/>
            <person name="Jimenez J."/>
            <person name="Sanchez M."/>
            <person name="del Rey F."/>
            <person name="Benito J."/>
            <person name="Dominguez A."/>
            <person name="Revuelta J.L."/>
            <person name="Moreno S."/>
            <person name="Armstrong J."/>
            <person name="Forsburg S.L."/>
            <person name="Cerutti L."/>
            <person name="Lowe T."/>
            <person name="McCombie W.R."/>
            <person name="Paulsen I."/>
            <person name="Potashkin J."/>
            <person name="Shpakovski G.V."/>
            <person name="Ussery D."/>
            <person name="Barrell B.G."/>
            <person name="Nurse P."/>
        </authorList>
    </citation>
    <scope>NUCLEOTIDE SEQUENCE [LARGE SCALE GENOMIC DNA]</scope>
    <source>
        <strain>972 / ATCC 24843</strain>
    </source>
</reference>
<reference key="2">
    <citation type="journal article" date="2006" name="Nat. Biotechnol.">
        <title>ORFeome cloning and global analysis of protein localization in the fission yeast Schizosaccharomyces pombe.</title>
        <authorList>
            <person name="Matsuyama A."/>
            <person name="Arai R."/>
            <person name="Yashiroda Y."/>
            <person name="Shirai A."/>
            <person name="Kamata A."/>
            <person name="Sekido S."/>
            <person name="Kobayashi Y."/>
            <person name="Hashimoto A."/>
            <person name="Hamamoto M."/>
            <person name="Hiraoka Y."/>
            <person name="Horinouchi S."/>
            <person name="Yoshida M."/>
        </authorList>
    </citation>
    <scope>SUBCELLULAR LOCATION [LARGE SCALE ANALYSIS]</scope>
</reference>
<comment type="subcellular location">
    <subcellularLocation>
        <location evidence="2">Cytoplasm</location>
    </subcellularLocation>
    <subcellularLocation>
        <location evidence="2">Nucleus</location>
    </subcellularLocation>
</comment>
<comment type="similarity">
    <text evidence="1">Belongs to the class V-like SAM-binding methyltransferase superfamily.</text>
</comment>
<proteinExistence type="inferred from homology"/>
<gene>
    <name type="primary">set8</name>
    <name type="ORF">SPAC3C7.09</name>
</gene>
<dbReference type="EC" id="2.1.1.-"/>
<dbReference type="EMBL" id="CU329670">
    <property type="protein sequence ID" value="CAB16739.1"/>
    <property type="molecule type" value="Genomic_DNA"/>
</dbReference>
<dbReference type="PIR" id="T38695">
    <property type="entry name" value="T38695"/>
</dbReference>
<dbReference type="RefSeq" id="NP_593610.1">
    <property type="nucleotide sequence ID" value="NM_001019041.2"/>
</dbReference>
<dbReference type="SMR" id="O14135"/>
<dbReference type="BioGRID" id="279590">
    <property type="interactions" value="15"/>
</dbReference>
<dbReference type="FunCoup" id="O14135">
    <property type="interactions" value="272"/>
</dbReference>
<dbReference type="STRING" id="284812.O14135"/>
<dbReference type="PaxDb" id="4896-SPAC3C7.09.1"/>
<dbReference type="EnsemblFungi" id="SPAC3C7.09.1">
    <property type="protein sequence ID" value="SPAC3C7.09.1:pep"/>
    <property type="gene ID" value="SPAC3C7.09"/>
</dbReference>
<dbReference type="GeneID" id="2543159"/>
<dbReference type="KEGG" id="spo:2543159"/>
<dbReference type="PomBase" id="SPAC3C7.09">
    <property type="gene designation" value="set8"/>
</dbReference>
<dbReference type="VEuPathDB" id="FungiDB:SPAC3C7.09"/>
<dbReference type="eggNOG" id="KOG1337">
    <property type="taxonomic scope" value="Eukaryota"/>
</dbReference>
<dbReference type="HOGENOM" id="CLU_044629_0_0_1"/>
<dbReference type="InParanoid" id="O14135"/>
<dbReference type="OMA" id="AWYRSRC"/>
<dbReference type="PhylomeDB" id="O14135"/>
<dbReference type="PRO" id="PR:O14135"/>
<dbReference type="Proteomes" id="UP000002485">
    <property type="component" value="Chromosome I"/>
</dbReference>
<dbReference type="GO" id="GO:0005829">
    <property type="term" value="C:cytosol"/>
    <property type="evidence" value="ECO:0007005"/>
    <property type="project" value="PomBase"/>
</dbReference>
<dbReference type="GO" id="GO:0005634">
    <property type="term" value="C:nucleus"/>
    <property type="evidence" value="ECO:0007005"/>
    <property type="project" value="PomBase"/>
</dbReference>
<dbReference type="GO" id="GO:0016279">
    <property type="term" value="F:protein-lysine N-methyltransferase activity"/>
    <property type="evidence" value="ECO:0000318"/>
    <property type="project" value="GO_Central"/>
</dbReference>
<dbReference type="GO" id="GO:0032259">
    <property type="term" value="P:methylation"/>
    <property type="evidence" value="ECO:0007669"/>
    <property type="project" value="UniProtKB-KW"/>
</dbReference>
<dbReference type="CDD" id="cd10527">
    <property type="entry name" value="SET_LSMT"/>
    <property type="match status" value="1"/>
</dbReference>
<dbReference type="Gene3D" id="3.90.1410.10">
    <property type="entry name" value="set domain protein methyltransferase, domain 1"/>
    <property type="match status" value="1"/>
</dbReference>
<dbReference type="InterPro" id="IPR011219">
    <property type="entry name" value="Rubisco-cyt_methylase_MET"/>
</dbReference>
<dbReference type="InterPro" id="IPR001214">
    <property type="entry name" value="SET_dom"/>
</dbReference>
<dbReference type="InterPro" id="IPR046341">
    <property type="entry name" value="SET_dom_sf"/>
</dbReference>
<dbReference type="InterPro" id="IPR050600">
    <property type="entry name" value="SETD3_SETD6_MTase"/>
</dbReference>
<dbReference type="PANTHER" id="PTHR13271:SF76">
    <property type="entry name" value="SET DOMAIN-CONTAINING PROTEIN 8"/>
    <property type="match status" value="1"/>
</dbReference>
<dbReference type="PANTHER" id="PTHR13271">
    <property type="entry name" value="UNCHARACTERIZED PUTATIVE METHYLTRANSFERASE"/>
    <property type="match status" value="1"/>
</dbReference>
<dbReference type="Pfam" id="PF00856">
    <property type="entry name" value="SET"/>
    <property type="match status" value="1"/>
</dbReference>
<dbReference type="PIRSF" id="PIRSF026986">
    <property type="entry name" value="MET_SET"/>
    <property type="match status" value="1"/>
</dbReference>
<dbReference type="SMART" id="SM00317">
    <property type="entry name" value="SET"/>
    <property type="match status" value="1"/>
</dbReference>
<dbReference type="SUPFAM" id="SSF82199">
    <property type="entry name" value="SET domain"/>
    <property type="match status" value="1"/>
</dbReference>
<dbReference type="PROSITE" id="PS50280">
    <property type="entry name" value="SET"/>
    <property type="match status" value="1"/>
</dbReference>
<accession>O14135</accession>
<protein>
    <recommendedName>
        <fullName>SET domain-containing protein 8</fullName>
        <ecNumber>2.1.1.-</ecNumber>
    </recommendedName>
</protein>
<sequence length="429" mass="49598">MDIKYNELVNQFAPGAKQITIKKIRKKGNGIFSLNRYTSGTVLLEVPLENIICRKTVEQFRNSCDKFASIATLEEWNDMSFRTQAMLFLCYLWLGIQPRTNKWDKFLTVLPLSINTPAQWPEKEVYSLQGTSIFNPVCVKRKILQQEWLSLNQRYSDSWPSKITLPKWVHADALFHSRCLESPFKDPVLAPVIDLCNHSSKSNAKWSFSEDAMQLYLDKDIDENEEVTINYGSEKGSAEFLFSYGFLPEPEGDRITNVMKLLIPEDSNDSLDLAKRRSCKTPPMIEFVSDSSGELWWHAPFLFFSVLNVEDFTNFKMVCDESKAQTVDWEFEGQKCSVEDLPKLVQLSPKRDLYILRVFCLAEQLADAALNTNIENMYNPTERRSESVELLKRESFLLKKVLLYLRDVISKLLKSKVVVEFIHSQTIES</sequence>
<keyword id="KW-0963">Cytoplasm</keyword>
<keyword id="KW-0489">Methyltransferase</keyword>
<keyword id="KW-0539">Nucleus</keyword>
<keyword id="KW-1185">Reference proteome</keyword>
<keyword id="KW-0949">S-adenosyl-L-methionine</keyword>
<keyword id="KW-0808">Transferase</keyword>